<sequence>MSQPIPPEDVWPTYKRLLSYVRPYWFMLVISVIGYALYAGAQAGAAQLAGYLGDTIVNPTDARVLIVSIAPLVLVLFQGLGQFMGSYSMNWVAQQIVYVLRNDVFEHVLKLPQSEYHRNASGRIMSKIIFDAQQVTSAGTDAIIVIIREGLTVIGLFSFLLWQNWKLTLILVTVVPLIALVMNITSKRFRKISRRIQSSMANITHFLGEAIEGSGEVKIFGGQAQEADRFHNVSRSFAKQNVKLNASKIASTVIVQLFVAVGIGFITYLYIHLMGEDLTVGGFLSYITAAGMIQKPLKQLTDVNVKVQRGVTGAASLFELLDTEQETDTGTYTVATKVDGNIDFEGVSFGYDPASPVVRQLNFAIKAGETVALVGRSGAGKSTISAMLPRFFDPDQGRILLDGIPLQEYQLSELRNQIAMVSQRVVLFNDSVRNNIAYGELRSSDDASIIKAAKDAHAWSFIEQLEHGLDTLLGQDGVQLSGGQRQRIAIARALLKDAPVLILDEATSALDSESEHHIQQALEQVMQGRTTLVIAHRLSTIEKADRIMVLDQGQLIEQGSHQQLLEKNGLYTQMYRMNFSEE</sequence>
<accession>Q0VQP5</accession>
<keyword id="KW-0067">ATP-binding</keyword>
<keyword id="KW-0997">Cell inner membrane</keyword>
<keyword id="KW-1003">Cell membrane</keyword>
<keyword id="KW-0445">Lipid transport</keyword>
<keyword id="KW-0472">Membrane</keyword>
<keyword id="KW-0547">Nucleotide-binding</keyword>
<keyword id="KW-1185">Reference proteome</keyword>
<keyword id="KW-1278">Translocase</keyword>
<keyword id="KW-0812">Transmembrane</keyword>
<keyword id="KW-1133">Transmembrane helix</keyword>
<keyword id="KW-0813">Transport</keyword>
<protein>
    <recommendedName>
        <fullName evidence="1">ATP-dependent lipid A-core flippase</fullName>
        <ecNumber evidence="1">7.5.2.6</ecNumber>
    </recommendedName>
    <alternativeName>
        <fullName evidence="1">Lipid A export ATP-binding/permease protein MsbA</fullName>
    </alternativeName>
</protein>
<comment type="function">
    <text evidence="1">Involved in lipopolysaccharide (LPS) biosynthesis. Translocates lipid A-core from the inner to the outer leaflet of the inner membrane. Transmembrane domains (TMD) form a pore in the inner membrane and the ATP-binding domain (NBD) is responsible for energy generation.</text>
</comment>
<comment type="catalytic activity">
    <reaction evidence="1">
        <text>ATP + H2O + lipid A-core oligosaccharideSide 1 = ADP + phosphate + lipid A-core oligosaccharideSide 2.</text>
        <dbReference type="EC" id="7.5.2.6"/>
    </reaction>
</comment>
<comment type="subunit">
    <text evidence="1">Homodimer.</text>
</comment>
<comment type="subcellular location">
    <subcellularLocation>
        <location evidence="1">Cell inner membrane</location>
        <topology evidence="1">Multi-pass membrane protein</topology>
    </subcellularLocation>
</comment>
<comment type="domain">
    <text evidence="1">In MsbA the ATP-binding domain (NBD) and the transmembrane domain (TMD) are fused.</text>
</comment>
<comment type="similarity">
    <text evidence="1">Belongs to the ABC transporter superfamily. Lipid exporter (TC 3.A.1.106) family.</text>
</comment>
<organism>
    <name type="scientific">Alcanivorax borkumensis (strain ATCC 700651 / DSM 11573 / NCIMB 13689 / SK2)</name>
    <dbReference type="NCBI Taxonomy" id="393595"/>
    <lineage>
        <taxon>Bacteria</taxon>
        <taxon>Pseudomonadati</taxon>
        <taxon>Pseudomonadota</taxon>
        <taxon>Gammaproteobacteria</taxon>
        <taxon>Oceanospirillales</taxon>
        <taxon>Alcanivoracaceae</taxon>
        <taxon>Alcanivorax</taxon>
    </lineage>
</organism>
<proteinExistence type="inferred from homology"/>
<gene>
    <name evidence="1" type="primary">msbA</name>
    <name type="ordered locus">ABO_1055</name>
</gene>
<feature type="chain" id="PRO_0000271611" description="ATP-dependent lipid A-core flippase">
    <location>
        <begin position="1"/>
        <end position="582"/>
    </location>
</feature>
<feature type="transmembrane region" description="Helical" evidence="1">
    <location>
        <begin position="25"/>
        <end position="45"/>
    </location>
</feature>
<feature type="transmembrane region" description="Helical" evidence="1">
    <location>
        <begin position="64"/>
        <end position="84"/>
    </location>
</feature>
<feature type="transmembrane region" description="Helical" evidence="1">
    <location>
        <begin position="142"/>
        <end position="162"/>
    </location>
</feature>
<feature type="transmembrane region" description="Helical" evidence="1">
    <location>
        <begin position="165"/>
        <end position="185"/>
    </location>
</feature>
<feature type="transmembrane region" description="Helical" evidence="1">
    <location>
        <begin position="253"/>
        <end position="273"/>
    </location>
</feature>
<feature type="domain" description="ABC transmembrane type-1" evidence="1">
    <location>
        <begin position="29"/>
        <end position="309"/>
    </location>
</feature>
<feature type="domain" description="ABC transporter" evidence="1">
    <location>
        <begin position="342"/>
        <end position="577"/>
    </location>
</feature>
<feature type="binding site" evidence="1">
    <location>
        <begin position="375"/>
        <end position="382"/>
    </location>
    <ligand>
        <name>ATP</name>
        <dbReference type="ChEBI" id="CHEBI:30616"/>
    </ligand>
</feature>
<reference key="1">
    <citation type="journal article" date="2006" name="Nat. Biotechnol.">
        <title>Genome sequence of the ubiquitous hydrocarbon-degrading marine bacterium Alcanivorax borkumensis.</title>
        <authorList>
            <person name="Schneiker S."/>
            <person name="Martins dos Santos V.A.P."/>
            <person name="Bartels D."/>
            <person name="Bekel T."/>
            <person name="Brecht M."/>
            <person name="Buhrmester J."/>
            <person name="Chernikova T.N."/>
            <person name="Denaro R."/>
            <person name="Ferrer M."/>
            <person name="Gertler C."/>
            <person name="Goesmann A."/>
            <person name="Golyshina O.V."/>
            <person name="Kaminski F."/>
            <person name="Khachane A.N."/>
            <person name="Lang S."/>
            <person name="Linke B."/>
            <person name="McHardy A.C."/>
            <person name="Meyer F."/>
            <person name="Nechitaylo T."/>
            <person name="Puehler A."/>
            <person name="Regenhardt D."/>
            <person name="Rupp O."/>
            <person name="Sabirova J.S."/>
            <person name="Selbitschka W."/>
            <person name="Yakimov M.M."/>
            <person name="Timmis K.N."/>
            <person name="Vorhoelter F.-J."/>
            <person name="Weidner S."/>
            <person name="Kaiser O."/>
            <person name="Golyshin P.N."/>
        </authorList>
    </citation>
    <scope>NUCLEOTIDE SEQUENCE [LARGE SCALE GENOMIC DNA]</scope>
    <source>
        <strain>ATCC 700651 / DSM 11573 / NCIMB 13689 / SK2</strain>
    </source>
</reference>
<name>MSBA_ALCBS</name>
<dbReference type="EC" id="7.5.2.6" evidence="1"/>
<dbReference type="EMBL" id="AM286690">
    <property type="protein sequence ID" value="CAL16503.1"/>
    <property type="molecule type" value="Genomic_DNA"/>
</dbReference>
<dbReference type="RefSeq" id="WP_011588339.1">
    <property type="nucleotide sequence ID" value="NC_008260.1"/>
</dbReference>
<dbReference type="SMR" id="Q0VQP5"/>
<dbReference type="STRING" id="393595.ABO_1055"/>
<dbReference type="KEGG" id="abo:ABO_1055"/>
<dbReference type="eggNOG" id="COG1132">
    <property type="taxonomic scope" value="Bacteria"/>
</dbReference>
<dbReference type="HOGENOM" id="CLU_000604_84_4_6"/>
<dbReference type="OrthoDB" id="9806127at2"/>
<dbReference type="Proteomes" id="UP000008871">
    <property type="component" value="Chromosome"/>
</dbReference>
<dbReference type="GO" id="GO:0005886">
    <property type="term" value="C:plasma membrane"/>
    <property type="evidence" value="ECO:0007669"/>
    <property type="project" value="UniProtKB-SubCell"/>
</dbReference>
<dbReference type="GO" id="GO:0015421">
    <property type="term" value="F:ABC-type oligopeptide transporter activity"/>
    <property type="evidence" value="ECO:0007669"/>
    <property type="project" value="TreeGrafter"/>
</dbReference>
<dbReference type="GO" id="GO:0005524">
    <property type="term" value="F:ATP binding"/>
    <property type="evidence" value="ECO:0007669"/>
    <property type="project" value="UniProtKB-KW"/>
</dbReference>
<dbReference type="GO" id="GO:0016887">
    <property type="term" value="F:ATP hydrolysis activity"/>
    <property type="evidence" value="ECO:0007669"/>
    <property type="project" value="InterPro"/>
</dbReference>
<dbReference type="GO" id="GO:0034040">
    <property type="term" value="F:ATPase-coupled lipid transmembrane transporter activity"/>
    <property type="evidence" value="ECO:0007669"/>
    <property type="project" value="InterPro"/>
</dbReference>
<dbReference type="CDD" id="cd18552">
    <property type="entry name" value="ABC_6TM_MsbA_like"/>
    <property type="match status" value="1"/>
</dbReference>
<dbReference type="FunFam" id="3.40.50.300:FF:000140">
    <property type="entry name" value="Lipid A export ATP-binding/permease protein MsbA"/>
    <property type="match status" value="1"/>
</dbReference>
<dbReference type="Gene3D" id="1.20.1560.10">
    <property type="entry name" value="ABC transporter type 1, transmembrane domain"/>
    <property type="match status" value="1"/>
</dbReference>
<dbReference type="Gene3D" id="3.40.50.300">
    <property type="entry name" value="P-loop containing nucleotide triphosphate hydrolases"/>
    <property type="match status" value="1"/>
</dbReference>
<dbReference type="InterPro" id="IPR003593">
    <property type="entry name" value="AAA+_ATPase"/>
</dbReference>
<dbReference type="InterPro" id="IPR011527">
    <property type="entry name" value="ABC1_TM_dom"/>
</dbReference>
<dbReference type="InterPro" id="IPR036640">
    <property type="entry name" value="ABC1_TM_sf"/>
</dbReference>
<dbReference type="InterPro" id="IPR003439">
    <property type="entry name" value="ABC_transporter-like_ATP-bd"/>
</dbReference>
<dbReference type="InterPro" id="IPR017871">
    <property type="entry name" value="ABC_transporter-like_CS"/>
</dbReference>
<dbReference type="InterPro" id="IPR011917">
    <property type="entry name" value="ABC_transpr_lipidA"/>
</dbReference>
<dbReference type="InterPro" id="IPR027417">
    <property type="entry name" value="P-loop_NTPase"/>
</dbReference>
<dbReference type="InterPro" id="IPR039421">
    <property type="entry name" value="Type_1_exporter"/>
</dbReference>
<dbReference type="NCBIfam" id="TIGR02203">
    <property type="entry name" value="MsbA_lipidA"/>
    <property type="match status" value="1"/>
</dbReference>
<dbReference type="PANTHER" id="PTHR43394:SF1">
    <property type="entry name" value="ATP-BINDING CASSETTE SUB-FAMILY B MEMBER 10, MITOCHONDRIAL"/>
    <property type="match status" value="1"/>
</dbReference>
<dbReference type="PANTHER" id="PTHR43394">
    <property type="entry name" value="ATP-DEPENDENT PERMEASE MDL1, MITOCHONDRIAL"/>
    <property type="match status" value="1"/>
</dbReference>
<dbReference type="Pfam" id="PF00664">
    <property type="entry name" value="ABC_membrane"/>
    <property type="match status" value="1"/>
</dbReference>
<dbReference type="Pfam" id="PF00005">
    <property type="entry name" value="ABC_tran"/>
    <property type="match status" value="1"/>
</dbReference>
<dbReference type="SMART" id="SM00382">
    <property type="entry name" value="AAA"/>
    <property type="match status" value="1"/>
</dbReference>
<dbReference type="SUPFAM" id="SSF90123">
    <property type="entry name" value="ABC transporter transmembrane region"/>
    <property type="match status" value="1"/>
</dbReference>
<dbReference type="SUPFAM" id="SSF52540">
    <property type="entry name" value="P-loop containing nucleoside triphosphate hydrolases"/>
    <property type="match status" value="1"/>
</dbReference>
<dbReference type="PROSITE" id="PS50929">
    <property type="entry name" value="ABC_TM1F"/>
    <property type="match status" value="1"/>
</dbReference>
<dbReference type="PROSITE" id="PS00211">
    <property type="entry name" value="ABC_TRANSPORTER_1"/>
    <property type="match status" value="1"/>
</dbReference>
<dbReference type="PROSITE" id="PS50893">
    <property type="entry name" value="ABC_TRANSPORTER_2"/>
    <property type="match status" value="1"/>
</dbReference>
<dbReference type="PROSITE" id="PS51239">
    <property type="entry name" value="MSBA"/>
    <property type="match status" value="1"/>
</dbReference>
<evidence type="ECO:0000255" key="1">
    <source>
        <dbReference type="HAMAP-Rule" id="MF_01703"/>
    </source>
</evidence>